<accession>A1CX29</accession>
<gene>
    <name type="primary">dpp4</name>
    <name type="ORF">NFIA_106690</name>
</gene>
<protein>
    <recommendedName>
        <fullName>Probable dipeptidyl peptidase 4</fullName>
        <ecNumber>3.4.14.5</ecNumber>
    </recommendedName>
    <alternativeName>
        <fullName>Dipeptidyl peptidase IV</fullName>
        <shortName>DPP IV</shortName>
        <shortName>DppIV</shortName>
    </alternativeName>
</protein>
<dbReference type="EC" id="3.4.14.5"/>
<dbReference type="EMBL" id="DS027685">
    <property type="protein sequence ID" value="EAW25181.1"/>
    <property type="molecule type" value="Genomic_DNA"/>
</dbReference>
<dbReference type="RefSeq" id="XP_001267078.1">
    <property type="nucleotide sequence ID" value="XM_001267077.1"/>
</dbReference>
<dbReference type="SMR" id="A1CX29"/>
<dbReference type="STRING" id="331117.A1CX29"/>
<dbReference type="ESTHER" id="aspfu-DPP4">
    <property type="family name" value="DPP4N_Peptidase_S9"/>
</dbReference>
<dbReference type="MEROPS" id="S09.008"/>
<dbReference type="GlyCosmos" id="A1CX29">
    <property type="glycosylation" value="9 sites, No reported glycans"/>
</dbReference>
<dbReference type="EnsemblFungi" id="EAW25181">
    <property type="protein sequence ID" value="EAW25181"/>
    <property type="gene ID" value="NFIA_106690"/>
</dbReference>
<dbReference type="GeneID" id="4593808"/>
<dbReference type="KEGG" id="nfi:NFIA_106690"/>
<dbReference type="VEuPathDB" id="FungiDB:NFIA_106690"/>
<dbReference type="eggNOG" id="KOG2100">
    <property type="taxonomic scope" value="Eukaryota"/>
</dbReference>
<dbReference type="HOGENOM" id="CLU_006105_0_2_1"/>
<dbReference type="OMA" id="YTSTEHH"/>
<dbReference type="OrthoDB" id="16520at2759"/>
<dbReference type="Proteomes" id="UP000006702">
    <property type="component" value="Unassembled WGS sequence"/>
</dbReference>
<dbReference type="GO" id="GO:0005576">
    <property type="term" value="C:extracellular region"/>
    <property type="evidence" value="ECO:0007669"/>
    <property type="project" value="UniProtKB-SubCell"/>
</dbReference>
<dbReference type="GO" id="GO:0005886">
    <property type="term" value="C:plasma membrane"/>
    <property type="evidence" value="ECO:0007669"/>
    <property type="project" value="TreeGrafter"/>
</dbReference>
<dbReference type="GO" id="GO:0004177">
    <property type="term" value="F:aminopeptidase activity"/>
    <property type="evidence" value="ECO:0007669"/>
    <property type="project" value="UniProtKB-KW"/>
</dbReference>
<dbReference type="GO" id="GO:0008239">
    <property type="term" value="F:dipeptidyl-peptidase activity"/>
    <property type="evidence" value="ECO:0007669"/>
    <property type="project" value="UniProtKB-EC"/>
</dbReference>
<dbReference type="GO" id="GO:0008236">
    <property type="term" value="F:serine-type peptidase activity"/>
    <property type="evidence" value="ECO:0007669"/>
    <property type="project" value="UniProtKB-KW"/>
</dbReference>
<dbReference type="GO" id="GO:0006508">
    <property type="term" value="P:proteolysis"/>
    <property type="evidence" value="ECO:0007669"/>
    <property type="project" value="UniProtKB-KW"/>
</dbReference>
<dbReference type="FunFam" id="3.40.50.1820:FF:000003">
    <property type="entry name" value="Dipeptidyl peptidase 4"/>
    <property type="match status" value="1"/>
</dbReference>
<dbReference type="FunFam" id="2.140.10.30:FF:000003">
    <property type="entry name" value="Probable dipeptidyl peptidase 4"/>
    <property type="match status" value="1"/>
</dbReference>
<dbReference type="Gene3D" id="3.40.50.1820">
    <property type="entry name" value="alpha/beta hydrolase"/>
    <property type="match status" value="1"/>
</dbReference>
<dbReference type="Gene3D" id="2.140.10.30">
    <property type="entry name" value="Dipeptidylpeptidase IV, N-terminal domain"/>
    <property type="match status" value="1"/>
</dbReference>
<dbReference type="InterPro" id="IPR029058">
    <property type="entry name" value="AB_hydrolase_fold"/>
</dbReference>
<dbReference type="InterPro" id="IPR001375">
    <property type="entry name" value="Peptidase_S9_cat"/>
</dbReference>
<dbReference type="InterPro" id="IPR002469">
    <property type="entry name" value="Peptidase_S9B_N"/>
</dbReference>
<dbReference type="InterPro" id="IPR050278">
    <property type="entry name" value="Serine_Prot_S9B/DPPIV"/>
</dbReference>
<dbReference type="PANTHER" id="PTHR11731:SF162">
    <property type="entry name" value="DIPEPTIDYL PEPTIDASE 4-RELATED"/>
    <property type="match status" value="1"/>
</dbReference>
<dbReference type="PANTHER" id="PTHR11731">
    <property type="entry name" value="PROTEASE FAMILY S9B,C DIPEPTIDYL-PEPTIDASE IV-RELATED"/>
    <property type="match status" value="1"/>
</dbReference>
<dbReference type="Pfam" id="PF00930">
    <property type="entry name" value="DPPIV_N"/>
    <property type="match status" value="1"/>
</dbReference>
<dbReference type="Pfam" id="PF00326">
    <property type="entry name" value="Peptidase_S9"/>
    <property type="match status" value="1"/>
</dbReference>
<dbReference type="SUPFAM" id="SSF53474">
    <property type="entry name" value="alpha/beta-Hydrolases"/>
    <property type="match status" value="1"/>
</dbReference>
<dbReference type="SUPFAM" id="SSF82171">
    <property type="entry name" value="DPP6 N-terminal domain-like"/>
    <property type="match status" value="1"/>
</dbReference>
<sequence>MKWSILLLVGCAAAIDVPRQPYAPTGSGKKRLTFNETVVKRAISPSAISVEWISTSEDGDYVYQDQDGSLKIQSIVTNNTQTLVPADKVPEDAYSYWIHPNLSSVLWATNYTKQYRHSYFADYFIQDVQSMNLRPLAPDQSGDIQYAQWSPTGDAIAFVRGNDVFVWTNASTSQITNDGGPDLFNGVPDWIYEEEILGDRFALWFSPDGAYLAFLRFNETGVPTFTVPYYMDNEEIAPPYPRELELRYPKVSQTNPTVELNLLELRTGERTPVPIDAFDAKELIIGEVAWLTEKHDVVAVKAFNRVQDRQKVVAVDVASLRTKTINERDGTDGWLDNLLSMAYIGPIGESKEEYYIDISDQSGWAHLWLFPVAGGEPIALTKGEWEVTAILSIDKPRQLVYFLSTKHHSTERHLYSVSWKTMEITPLVDDTVPAVWSASFSSQGGYYILSYRGPDVPYQDLYAINSTAPLRTITSNAAVLDGLKEYTLPNITYFELALPSGETLNVMQRLPVKFSSKKKYPVLFTPYGGPGAQEVSKAWQALDFKAYIASDPELEYITWTVDNRGTGYKGRAFRCQVTSRLGELEAADQVFAAQQAAKLPYVDADHIAIWGWSYGGYLTGKVIETDSGAFSLGVQTAPVSDWRFYDSMYTERYMKTLESNAAGYNASAIRKVAGYKNVRGGVLIQHGTGDDNVHFQNAAALVDTLVGAGVTPEKLQVQWFTDSDHGIRYHGGNVFLYRQLSKRLYEEKKRKEKGEAHQWSKKSVL</sequence>
<keyword id="KW-0031">Aminopeptidase</keyword>
<keyword id="KW-0325">Glycoprotein</keyword>
<keyword id="KW-0378">Hydrolase</keyword>
<keyword id="KW-0645">Protease</keyword>
<keyword id="KW-1185">Reference proteome</keyword>
<keyword id="KW-0964">Secreted</keyword>
<keyword id="KW-0720">Serine protease</keyword>
<keyword id="KW-0732">Signal</keyword>
<comment type="function">
    <text evidence="1">Extracellular dipeptidyl-peptidase which removes N-terminal dipeptides sequentially from polypeptides having unsubstituted N-termini provided that the penultimate residue is proline.</text>
</comment>
<comment type="catalytic activity">
    <reaction>
        <text>Release of an N-terminal dipeptide, Xaa-Yaa-|-Zaa-, from a polypeptide, preferentially when Yaa is Pro, provided Zaa is neither Pro nor hydroxyproline.</text>
        <dbReference type="EC" id="3.4.14.5"/>
    </reaction>
</comment>
<comment type="subcellular location">
    <subcellularLocation>
        <location evidence="1">Secreted</location>
    </subcellularLocation>
</comment>
<comment type="similarity">
    <text evidence="3">Belongs to the peptidase S9B family.</text>
</comment>
<evidence type="ECO:0000250" key="1"/>
<evidence type="ECO:0000255" key="2"/>
<evidence type="ECO:0000305" key="3"/>
<proteinExistence type="inferred from homology"/>
<feature type="signal peptide" evidence="2">
    <location>
        <begin position="1"/>
        <end position="14"/>
    </location>
</feature>
<feature type="chain" id="PRO_0000397814" description="Probable dipeptidyl peptidase 4">
    <location>
        <begin position="15"/>
        <end position="765"/>
    </location>
</feature>
<feature type="active site" description="Charge relay system" evidence="1">
    <location>
        <position position="613"/>
    </location>
</feature>
<feature type="active site" description="Charge relay system" evidence="1">
    <location>
        <position position="690"/>
    </location>
</feature>
<feature type="active site" description="Charge relay system" evidence="1">
    <location>
        <position position="725"/>
    </location>
</feature>
<feature type="glycosylation site" description="N-linked (GlcNAc...) asparagine" evidence="2">
    <location>
        <position position="35"/>
    </location>
</feature>
<feature type="glycosylation site" description="N-linked (GlcNAc...) asparagine" evidence="2">
    <location>
        <position position="78"/>
    </location>
</feature>
<feature type="glycosylation site" description="N-linked (GlcNAc...) asparagine" evidence="2">
    <location>
        <position position="101"/>
    </location>
</feature>
<feature type="glycosylation site" description="N-linked (GlcNAc...) asparagine" evidence="2">
    <location>
        <position position="110"/>
    </location>
</feature>
<feature type="glycosylation site" description="N-linked (GlcNAc...) asparagine" evidence="2">
    <location>
        <position position="169"/>
    </location>
</feature>
<feature type="glycosylation site" description="N-linked (GlcNAc...) asparagine" evidence="2">
    <location>
        <position position="218"/>
    </location>
</feature>
<feature type="glycosylation site" description="N-linked (GlcNAc...) asparagine" evidence="2">
    <location>
        <position position="465"/>
    </location>
</feature>
<feature type="glycosylation site" description="N-linked (GlcNAc...) asparagine" evidence="2">
    <location>
        <position position="490"/>
    </location>
</feature>
<feature type="glycosylation site" description="N-linked (GlcNAc...) asparagine" evidence="2">
    <location>
        <position position="665"/>
    </location>
</feature>
<reference key="1">
    <citation type="journal article" date="2008" name="PLoS Genet.">
        <title>Genomic islands in the pathogenic filamentous fungus Aspergillus fumigatus.</title>
        <authorList>
            <person name="Fedorova N.D."/>
            <person name="Khaldi N."/>
            <person name="Joardar V.S."/>
            <person name="Maiti R."/>
            <person name="Amedeo P."/>
            <person name="Anderson M.J."/>
            <person name="Crabtree J."/>
            <person name="Silva J.C."/>
            <person name="Badger J.H."/>
            <person name="Albarraq A."/>
            <person name="Angiuoli S."/>
            <person name="Bussey H."/>
            <person name="Bowyer P."/>
            <person name="Cotty P.J."/>
            <person name="Dyer P.S."/>
            <person name="Egan A."/>
            <person name="Galens K."/>
            <person name="Fraser-Liggett C.M."/>
            <person name="Haas B.J."/>
            <person name="Inman J.M."/>
            <person name="Kent R."/>
            <person name="Lemieux S."/>
            <person name="Malavazi I."/>
            <person name="Orvis J."/>
            <person name="Roemer T."/>
            <person name="Ronning C.M."/>
            <person name="Sundaram J.P."/>
            <person name="Sutton G."/>
            <person name="Turner G."/>
            <person name="Venter J.C."/>
            <person name="White O.R."/>
            <person name="Whitty B.R."/>
            <person name="Youngman P."/>
            <person name="Wolfe K.H."/>
            <person name="Goldman G.H."/>
            <person name="Wortman J.R."/>
            <person name="Jiang B."/>
            <person name="Denning D.W."/>
            <person name="Nierman W.C."/>
        </authorList>
    </citation>
    <scope>NUCLEOTIDE SEQUENCE [LARGE SCALE GENOMIC DNA]</scope>
    <source>
        <strain>ATCC 1020 / DSM 3700 / CBS 544.65 / FGSC A1164 / JCM 1740 / NRRL 181 / WB 181</strain>
    </source>
</reference>
<organism>
    <name type="scientific">Neosartorya fischeri (strain ATCC 1020 / DSM 3700 / CBS 544.65 / FGSC A1164 / JCM 1740 / NRRL 181 / WB 181)</name>
    <name type="common">Aspergillus fischerianus</name>
    <dbReference type="NCBI Taxonomy" id="331117"/>
    <lineage>
        <taxon>Eukaryota</taxon>
        <taxon>Fungi</taxon>
        <taxon>Dikarya</taxon>
        <taxon>Ascomycota</taxon>
        <taxon>Pezizomycotina</taxon>
        <taxon>Eurotiomycetes</taxon>
        <taxon>Eurotiomycetidae</taxon>
        <taxon>Eurotiales</taxon>
        <taxon>Aspergillaceae</taxon>
        <taxon>Aspergillus</taxon>
        <taxon>Aspergillus subgen. Fumigati</taxon>
    </lineage>
</organism>
<name>DPP4_NEOFI</name>